<keyword id="KW-0004">4Fe-4S</keyword>
<keyword id="KW-0408">Iron</keyword>
<keyword id="KW-0411">Iron-sulfur</keyword>
<keyword id="KW-0456">Lyase</keyword>
<keyword id="KW-0479">Metal-binding</keyword>
<keyword id="KW-1185">Reference proteome</keyword>
<keyword id="KW-0949">S-adenosyl-L-methionine</keyword>
<keyword id="KW-0784">Thiamine biosynthesis</keyword>
<keyword id="KW-0862">Zinc</keyword>
<sequence>MEPVQKLQIPYKSIRLSDGTEYQSYHTEGALSGKQPADYKNGIPAFRKEWIQKRFNHSNHSQMYFAKKGIITEEMRYAAFRENMEPEFVRSEIACGRAILPSNRNHPELEPMIIGKNFLVKINANIGNSTFSSSIEEEVEKLHWAIKWGADTVMDLSTGKNIHETREWILRNSPVPIGTVPIYQALEKVKGKTENLNIQIFLETLEEQAEQGVDYFTIHAGVLLRYIPLTTNRITGIVSRGGSILAKWCQAHHKENFLYTHFDEILKVMKKYGVSISLGDGLRPGSIADANDKAQFSELETLGELTQLAWKEDIQVMIEGPGHVPMNLIKENVDLQTKICQEAPFYTLGPIVTDIAPGYDHITSAIGAAMIGWYGTAMLCYVTPKEHLGLPNKEDVKQGVIAYKIAAHAADLAKGHPGAIDRDNLLSKARFEFRWEDQFSLSLDPETAKTFHDEMLPQDRMKTAHFCSMCGPHFCSMNLTQELRKFAQEKEIQES</sequence>
<dbReference type="EC" id="4.1.99.17" evidence="1"/>
<dbReference type="EMBL" id="AE010300">
    <property type="protein sequence ID" value="AAN48179.1"/>
    <property type="molecule type" value="Genomic_DNA"/>
</dbReference>
<dbReference type="RefSeq" id="NP_711161.1">
    <property type="nucleotide sequence ID" value="NC_004342.2"/>
</dbReference>
<dbReference type="RefSeq" id="WP_001972278.1">
    <property type="nucleotide sequence ID" value="NC_004342.2"/>
</dbReference>
<dbReference type="SMR" id="Q8F7G5"/>
<dbReference type="FunCoup" id="Q8F7G5">
    <property type="interactions" value="421"/>
</dbReference>
<dbReference type="STRING" id="189518.LA_0980"/>
<dbReference type="PaxDb" id="189518-LA_0980"/>
<dbReference type="EnsemblBacteria" id="AAN48179">
    <property type="protein sequence ID" value="AAN48179"/>
    <property type="gene ID" value="LA_0980"/>
</dbReference>
<dbReference type="KEGG" id="lil:LA_0980"/>
<dbReference type="PATRIC" id="fig|189518.3.peg.982"/>
<dbReference type="HOGENOM" id="CLU_013181_2_1_12"/>
<dbReference type="InParanoid" id="Q8F7G5"/>
<dbReference type="OrthoDB" id="9805897at2"/>
<dbReference type="UniPathway" id="UPA00060"/>
<dbReference type="Proteomes" id="UP000001408">
    <property type="component" value="Chromosome I"/>
</dbReference>
<dbReference type="GO" id="GO:0005829">
    <property type="term" value="C:cytosol"/>
    <property type="evidence" value="ECO:0000318"/>
    <property type="project" value="GO_Central"/>
</dbReference>
<dbReference type="GO" id="GO:0051539">
    <property type="term" value="F:4 iron, 4 sulfur cluster binding"/>
    <property type="evidence" value="ECO:0007669"/>
    <property type="project" value="UniProtKB-KW"/>
</dbReference>
<dbReference type="GO" id="GO:0016830">
    <property type="term" value="F:carbon-carbon lyase activity"/>
    <property type="evidence" value="ECO:0007669"/>
    <property type="project" value="InterPro"/>
</dbReference>
<dbReference type="GO" id="GO:0008270">
    <property type="term" value="F:zinc ion binding"/>
    <property type="evidence" value="ECO:0007669"/>
    <property type="project" value="UniProtKB-UniRule"/>
</dbReference>
<dbReference type="GO" id="GO:0009228">
    <property type="term" value="P:thiamine biosynthetic process"/>
    <property type="evidence" value="ECO:0000318"/>
    <property type="project" value="GO_Central"/>
</dbReference>
<dbReference type="GO" id="GO:0009229">
    <property type="term" value="P:thiamine diphosphate biosynthetic process"/>
    <property type="evidence" value="ECO:0007669"/>
    <property type="project" value="UniProtKB-UniRule"/>
</dbReference>
<dbReference type="FunFam" id="3.20.20.540:FF:000001">
    <property type="entry name" value="Phosphomethylpyrimidine synthase"/>
    <property type="match status" value="1"/>
</dbReference>
<dbReference type="Gene3D" id="6.10.250.620">
    <property type="match status" value="1"/>
</dbReference>
<dbReference type="Gene3D" id="3.20.20.540">
    <property type="entry name" value="Radical SAM ThiC family, central domain"/>
    <property type="match status" value="1"/>
</dbReference>
<dbReference type="HAMAP" id="MF_00089">
    <property type="entry name" value="ThiC"/>
    <property type="match status" value="1"/>
</dbReference>
<dbReference type="InterPro" id="IPR037509">
    <property type="entry name" value="ThiC"/>
</dbReference>
<dbReference type="InterPro" id="IPR038521">
    <property type="entry name" value="ThiC/Bza_core_dom"/>
</dbReference>
<dbReference type="InterPro" id="IPR002817">
    <property type="entry name" value="ThiC/BzaA/B"/>
</dbReference>
<dbReference type="NCBIfam" id="NF006763">
    <property type="entry name" value="PRK09284.1"/>
    <property type="match status" value="1"/>
</dbReference>
<dbReference type="NCBIfam" id="NF009895">
    <property type="entry name" value="PRK13352.1"/>
    <property type="match status" value="1"/>
</dbReference>
<dbReference type="NCBIfam" id="TIGR00190">
    <property type="entry name" value="thiC"/>
    <property type="match status" value="1"/>
</dbReference>
<dbReference type="PANTHER" id="PTHR30557:SF1">
    <property type="entry name" value="PHOSPHOMETHYLPYRIMIDINE SYNTHASE, CHLOROPLASTIC"/>
    <property type="match status" value="1"/>
</dbReference>
<dbReference type="PANTHER" id="PTHR30557">
    <property type="entry name" value="THIAMINE BIOSYNTHESIS PROTEIN THIC"/>
    <property type="match status" value="1"/>
</dbReference>
<dbReference type="Pfam" id="PF01964">
    <property type="entry name" value="ThiC_Rad_SAM"/>
    <property type="match status" value="1"/>
</dbReference>
<dbReference type="SFLD" id="SFLDF00407">
    <property type="entry name" value="phosphomethylpyrimidine_syntha"/>
    <property type="match status" value="1"/>
</dbReference>
<dbReference type="SFLD" id="SFLDG01114">
    <property type="entry name" value="phosphomethylpyrimidine_syntha"/>
    <property type="match status" value="1"/>
</dbReference>
<dbReference type="SFLD" id="SFLDS00113">
    <property type="entry name" value="Radical_SAM_Phosphomethylpyrim"/>
    <property type="match status" value="1"/>
</dbReference>
<gene>
    <name evidence="1" type="primary">thiC</name>
    <name type="ordered locus">LA_0980</name>
</gene>
<accession>Q8F7G5</accession>
<comment type="function">
    <text evidence="1">Catalyzes the synthesis of the hydroxymethylpyrimidine phosphate (HMP-P) moiety of thiamine from aminoimidazole ribotide (AIR) in a radical S-adenosyl-L-methionine (SAM)-dependent reaction.</text>
</comment>
<comment type="catalytic activity">
    <reaction evidence="1">
        <text>5-amino-1-(5-phospho-beta-D-ribosyl)imidazole + S-adenosyl-L-methionine = 4-amino-2-methyl-5-(phosphooxymethyl)pyrimidine + CO + 5'-deoxyadenosine + formate + L-methionine + 3 H(+)</text>
        <dbReference type="Rhea" id="RHEA:24840"/>
        <dbReference type="ChEBI" id="CHEBI:15378"/>
        <dbReference type="ChEBI" id="CHEBI:15740"/>
        <dbReference type="ChEBI" id="CHEBI:17245"/>
        <dbReference type="ChEBI" id="CHEBI:17319"/>
        <dbReference type="ChEBI" id="CHEBI:57844"/>
        <dbReference type="ChEBI" id="CHEBI:58354"/>
        <dbReference type="ChEBI" id="CHEBI:59789"/>
        <dbReference type="ChEBI" id="CHEBI:137981"/>
        <dbReference type="EC" id="4.1.99.17"/>
    </reaction>
</comment>
<comment type="cofactor">
    <cofactor evidence="1">
        <name>[4Fe-4S] cluster</name>
        <dbReference type="ChEBI" id="CHEBI:49883"/>
    </cofactor>
    <text evidence="1">Binds 1 [4Fe-4S] cluster per subunit. The cluster is coordinated with 3 cysteines and an exchangeable S-adenosyl-L-methionine.</text>
</comment>
<comment type="pathway">
    <text evidence="1">Cofactor biosynthesis; thiamine diphosphate biosynthesis.</text>
</comment>
<comment type="similarity">
    <text evidence="1">Belongs to the ThiC family.</text>
</comment>
<protein>
    <recommendedName>
        <fullName evidence="1">Phosphomethylpyrimidine synthase</fullName>
        <ecNumber evidence="1">4.1.99.17</ecNumber>
    </recommendedName>
    <alternativeName>
        <fullName evidence="1">Hydroxymethylpyrimidine phosphate synthase</fullName>
        <shortName evidence="1">HMP-P synthase</shortName>
        <shortName evidence="1">HMP-phosphate synthase</shortName>
        <shortName evidence="1">HMPP synthase</shortName>
    </alternativeName>
    <alternativeName>
        <fullName evidence="1">Thiamine biosynthesis protein ThiC</fullName>
    </alternativeName>
</protein>
<evidence type="ECO:0000255" key="1">
    <source>
        <dbReference type="HAMAP-Rule" id="MF_00089"/>
    </source>
</evidence>
<name>THIC_LEPIN</name>
<feature type="chain" id="PRO_0000152812" description="Phosphomethylpyrimidine synthase">
    <location>
        <begin position="1"/>
        <end position="495"/>
    </location>
</feature>
<feature type="binding site" evidence="1">
    <location>
        <position position="125"/>
    </location>
    <ligand>
        <name>substrate</name>
    </ligand>
</feature>
<feature type="binding site" evidence="1">
    <location>
        <position position="154"/>
    </location>
    <ligand>
        <name>substrate</name>
    </ligand>
</feature>
<feature type="binding site" evidence="1">
    <location>
        <position position="183"/>
    </location>
    <ligand>
        <name>substrate</name>
    </ligand>
</feature>
<feature type="binding site" evidence="1">
    <location>
        <position position="219"/>
    </location>
    <ligand>
        <name>substrate</name>
    </ligand>
</feature>
<feature type="binding site" evidence="1">
    <location>
        <begin position="239"/>
        <end position="241"/>
    </location>
    <ligand>
        <name>substrate</name>
    </ligand>
</feature>
<feature type="binding site" evidence="1">
    <location>
        <begin position="280"/>
        <end position="283"/>
    </location>
    <ligand>
        <name>substrate</name>
    </ligand>
</feature>
<feature type="binding site" evidence="1">
    <location>
        <position position="319"/>
    </location>
    <ligand>
        <name>substrate</name>
    </ligand>
</feature>
<feature type="binding site" evidence="1">
    <location>
        <position position="323"/>
    </location>
    <ligand>
        <name>Zn(2+)</name>
        <dbReference type="ChEBI" id="CHEBI:29105"/>
    </ligand>
</feature>
<feature type="binding site" evidence="1">
    <location>
        <position position="346"/>
    </location>
    <ligand>
        <name>substrate</name>
    </ligand>
</feature>
<feature type="binding site" evidence="1">
    <location>
        <position position="387"/>
    </location>
    <ligand>
        <name>Zn(2+)</name>
        <dbReference type="ChEBI" id="CHEBI:29105"/>
    </ligand>
</feature>
<feature type="binding site" evidence="1">
    <location>
        <position position="467"/>
    </location>
    <ligand>
        <name>[4Fe-4S] cluster</name>
        <dbReference type="ChEBI" id="CHEBI:49883"/>
        <note>4Fe-4S-S-AdoMet</note>
    </ligand>
</feature>
<feature type="binding site" evidence="1">
    <location>
        <position position="470"/>
    </location>
    <ligand>
        <name>[4Fe-4S] cluster</name>
        <dbReference type="ChEBI" id="CHEBI:49883"/>
        <note>4Fe-4S-S-AdoMet</note>
    </ligand>
</feature>
<feature type="binding site" evidence="1">
    <location>
        <position position="475"/>
    </location>
    <ligand>
        <name>[4Fe-4S] cluster</name>
        <dbReference type="ChEBI" id="CHEBI:49883"/>
        <note>4Fe-4S-S-AdoMet</note>
    </ligand>
</feature>
<organism>
    <name type="scientific">Leptospira interrogans serogroup Icterohaemorrhagiae serovar Lai (strain 56601)</name>
    <dbReference type="NCBI Taxonomy" id="189518"/>
    <lineage>
        <taxon>Bacteria</taxon>
        <taxon>Pseudomonadati</taxon>
        <taxon>Spirochaetota</taxon>
        <taxon>Spirochaetia</taxon>
        <taxon>Leptospirales</taxon>
        <taxon>Leptospiraceae</taxon>
        <taxon>Leptospira</taxon>
    </lineage>
</organism>
<proteinExistence type="inferred from homology"/>
<reference key="1">
    <citation type="journal article" date="2003" name="Nature">
        <title>Unique physiological and pathogenic features of Leptospira interrogans revealed by whole-genome sequencing.</title>
        <authorList>
            <person name="Ren S.-X."/>
            <person name="Fu G."/>
            <person name="Jiang X.-G."/>
            <person name="Zeng R."/>
            <person name="Miao Y.-G."/>
            <person name="Xu H."/>
            <person name="Zhang Y.-X."/>
            <person name="Xiong H."/>
            <person name="Lu G."/>
            <person name="Lu L.-F."/>
            <person name="Jiang H.-Q."/>
            <person name="Jia J."/>
            <person name="Tu Y.-F."/>
            <person name="Jiang J.-X."/>
            <person name="Gu W.-Y."/>
            <person name="Zhang Y.-Q."/>
            <person name="Cai Z."/>
            <person name="Sheng H.-H."/>
            <person name="Yin H.-F."/>
            <person name="Zhang Y."/>
            <person name="Zhu G.-F."/>
            <person name="Wan M."/>
            <person name="Huang H.-L."/>
            <person name="Qian Z."/>
            <person name="Wang S.-Y."/>
            <person name="Ma W."/>
            <person name="Yao Z.-J."/>
            <person name="Shen Y."/>
            <person name="Qiang B.-Q."/>
            <person name="Xia Q.-C."/>
            <person name="Guo X.-K."/>
            <person name="Danchin A."/>
            <person name="Saint Girons I."/>
            <person name="Somerville R.L."/>
            <person name="Wen Y.-M."/>
            <person name="Shi M.-H."/>
            <person name="Chen Z."/>
            <person name="Xu J.-G."/>
            <person name="Zhao G.-P."/>
        </authorList>
    </citation>
    <scope>NUCLEOTIDE SEQUENCE [LARGE SCALE GENOMIC DNA]</scope>
    <source>
        <strain>56601</strain>
    </source>
</reference>